<reference key="1">
    <citation type="journal article" date="1997" name="Yeast">
        <title>The essential Schizosaccharomyces pombe gpi1+ gene complements a bakers' yeast GPI anchoring mutant and is required for efficient cell separation.</title>
        <authorList>
            <person name="Colussi P.A."/>
            <person name="Orlean P."/>
        </authorList>
    </citation>
    <scope>NUCLEOTIDE SEQUENCE [MRNA]</scope>
</reference>
<reference key="2">
    <citation type="journal article" date="2002" name="Nature">
        <title>The genome sequence of Schizosaccharomyces pombe.</title>
        <authorList>
            <person name="Wood V."/>
            <person name="Gwilliam R."/>
            <person name="Rajandream M.A."/>
            <person name="Lyne M.H."/>
            <person name="Lyne R."/>
            <person name="Stewart A."/>
            <person name="Sgouros J.G."/>
            <person name="Peat N."/>
            <person name="Hayles J."/>
            <person name="Baker S.G."/>
            <person name="Basham D."/>
            <person name="Bowman S."/>
            <person name="Brooks K."/>
            <person name="Brown D."/>
            <person name="Brown S."/>
            <person name="Chillingworth T."/>
            <person name="Churcher C.M."/>
            <person name="Collins M."/>
            <person name="Connor R."/>
            <person name="Cronin A."/>
            <person name="Davis P."/>
            <person name="Feltwell T."/>
            <person name="Fraser A."/>
            <person name="Gentles S."/>
            <person name="Goble A."/>
            <person name="Hamlin N."/>
            <person name="Harris D.E."/>
            <person name="Hidalgo J."/>
            <person name="Hodgson G."/>
            <person name="Holroyd S."/>
            <person name="Hornsby T."/>
            <person name="Howarth S."/>
            <person name="Huckle E.J."/>
            <person name="Hunt S."/>
            <person name="Jagels K."/>
            <person name="James K.D."/>
            <person name="Jones L."/>
            <person name="Jones M."/>
            <person name="Leather S."/>
            <person name="McDonald S."/>
            <person name="McLean J."/>
            <person name="Mooney P."/>
            <person name="Moule S."/>
            <person name="Mungall K.L."/>
            <person name="Murphy L.D."/>
            <person name="Niblett D."/>
            <person name="Odell C."/>
            <person name="Oliver K."/>
            <person name="O'Neil S."/>
            <person name="Pearson D."/>
            <person name="Quail M.A."/>
            <person name="Rabbinowitsch E."/>
            <person name="Rutherford K.M."/>
            <person name="Rutter S."/>
            <person name="Saunders D."/>
            <person name="Seeger K."/>
            <person name="Sharp S."/>
            <person name="Skelton J."/>
            <person name="Simmonds M.N."/>
            <person name="Squares R."/>
            <person name="Squares S."/>
            <person name="Stevens K."/>
            <person name="Taylor K."/>
            <person name="Taylor R.G."/>
            <person name="Tivey A."/>
            <person name="Walsh S.V."/>
            <person name="Warren T."/>
            <person name="Whitehead S."/>
            <person name="Woodward J.R."/>
            <person name="Volckaert G."/>
            <person name="Aert R."/>
            <person name="Robben J."/>
            <person name="Grymonprez B."/>
            <person name="Weltjens I."/>
            <person name="Vanstreels E."/>
            <person name="Rieger M."/>
            <person name="Schaefer M."/>
            <person name="Mueller-Auer S."/>
            <person name="Gabel C."/>
            <person name="Fuchs M."/>
            <person name="Duesterhoeft A."/>
            <person name="Fritzc C."/>
            <person name="Holzer E."/>
            <person name="Moestl D."/>
            <person name="Hilbert H."/>
            <person name="Borzym K."/>
            <person name="Langer I."/>
            <person name="Beck A."/>
            <person name="Lehrach H."/>
            <person name="Reinhardt R."/>
            <person name="Pohl T.M."/>
            <person name="Eger P."/>
            <person name="Zimmermann W."/>
            <person name="Wedler H."/>
            <person name="Wambutt R."/>
            <person name="Purnelle B."/>
            <person name="Goffeau A."/>
            <person name="Cadieu E."/>
            <person name="Dreano S."/>
            <person name="Gloux S."/>
            <person name="Lelaure V."/>
            <person name="Mottier S."/>
            <person name="Galibert F."/>
            <person name="Aves S.J."/>
            <person name="Xiang Z."/>
            <person name="Hunt C."/>
            <person name="Moore K."/>
            <person name="Hurst S.M."/>
            <person name="Lucas M."/>
            <person name="Rochet M."/>
            <person name="Gaillardin C."/>
            <person name="Tallada V.A."/>
            <person name="Garzon A."/>
            <person name="Thode G."/>
            <person name="Daga R.R."/>
            <person name="Cruzado L."/>
            <person name="Jimenez J."/>
            <person name="Sanchez M."/>
            <person name="del Rey F."/>
            <person name="Benito J."/>
            <person name="Dominguez A."/>
            <person name="Revuelta J.L."/>
            <person name="Moreno S."/>
            <person name="Armstrong J."/>
            <person name="Forsburg S.L."/>
            <person name="Cerutti L."/>
            <person name="Lowe T."/>
            <person name="McCombie W.R."/>
            <person name="Paulsen I."/>
            <person name="Potashkin J."/>
            <person name="Shpakovski G.V."/>
            <person name="Ussery D."/>
            <person name="Barrell B.G."/>
            <person name="Nurse P."/>
        </authorList>
    </citation>
    <scope>NUCLEOTIDE SEQUENCE [LARGE SCALE GENOMIC DNA]</scope>
    <source>
        <strain>972 / ATCC 24843</strain>
    </source>
</reference>
<keyword id="KW-0337">GPI-anchor biosynthesis</keyword>
<keyword id="KW-0472">Membrane</keyword>
<keyword id="KW-1185">Reference proteome</keyword>
<keyword id="KW-0812">Transmembrane</keyword>
<keyword id="KW-1133">Transmembrane helix</keyword>
<organism>
    <name type="scientific">Schizosaccharomyces pombe (strain 972 / ATCC 24843)</name>
    <name type="common">Fission yeast</name>
    <dbReference type="NCBI Taxonomy" id="284812"/>
    <lineage>
        <taxon>Eukaryota</taxon>
        <taxon>Fungi</taxon>
        <taxon>Dikarya</taxon>
        <taxon>Ascomycota</taxon>
        <taxon>Taphrinomycotina</taxon>
        <taxon>Schizosaccharomycetes</taxon>
        <taxon>Schizosaccharomycetales</taxon>
        <taxon>Schizosaccharomycetaceae</taxon>
        <taxon>Schizosaccharomyces</taxon>
    </lineage>
</organism>
<name>GPI1_SCHPO</name>
<proteinExistence type="evidence at transcript level"/>
<protein>
    <recommendedName>
        <fullName>N-acetylglucosaminyl-phosphatidylinositol biosynthetic protein gpi1</fullName>
    </recommendedName>
</protein>
<sequence length="653" mass="76432">MSTTTMNIASAPIEVKRIYWPKSTISYTDSGYLVGWKYSTNDLIVVTTITSYQSFANFLVDYCKNQDQSVDIKSLCILGTFNCSADILPGDKYEIDCWIKVQQSTELSHPRVFDSASTPLKINLHIIYYHPPQPRKMQFLSLEPLSLLLLKDSFINKSNPEYESMQHQQILLKKLKLHFPRRKENSWKRSLRSGLIELLNQSFEVRMLTHENNNKKNSYVFRLFDRVSSSTFYFFNSLFAYFIILLRIINEVILLAINYRPIPLSYNMMDIFVSARQVDLRLQQACFWPVQYMKLWVFRKSKRVAIEDYKEYIRFYNNLWLVANDMIFGITMSSFILENLHLVVKLIENITFEYAIKNVRSMVIWLVDTPAGLKLNNDICKFIMKLSVWVIDVWSNFLLHCLPWTPFLVQVVAISGFGGASLMIALISDFLSVMTIHIHLLYLASSRLYNWQLRVIYSLLQLFRGKKRNVLRNRIDSYEYDLDQLLLGTILFTVLIFFLPTIYVFYAAFALTRVSVMTCLAICETMLAFLNHFPLFVTMLRIKDPYRIPSGLNFEIVSFEPLKQDGFATLYLNCNSKPMSLGSMFEHYRKLARRLISHYLSKTTLISLLVGCPVPAIPAEQLYNIQYAMLPTKRISIRKLRDLLFHQKKFPYD</sequence>
<comment type="function">
    <text>Necessary for the synthesis of N-acetylglucosaminyl-phosphatidylinositol, the very early intermediate in GPI-anchor biosynthesis.</text>
</comment>
<comment type="pathway">
    <text>Glycolipid biosynthesis; glycosylphosphatidylinositol-anchor biosynthesis.</text>
</comment>
<comment type="subcellular location">
    <subcellularLocation>
        <location evidence="2">Membrane</location>
        <topology evidence="2">Multi-pass membrane protein</topology>
    </subcellularLocation>
</comment>
<comment type="sequence caution" evidence="2">
    <conflict type="erroneous initiation">
        <sequence resource="EMBL-CDS" id="AAC49650"/>
    </conflict>
</comment>
<accession>O14357</accession>
<accession>P78971</accession>
<dbReference type="EMBL" id="U77355">
    <property type="protein sequence ID" value="AAC49650.1"/>
    <property type="status" value="ALT_INIT"/>
    <property type="molecule type" value="mRNA"/>
</dbReference>
<dbReference type="EMBL" id="CU329671">
    <property type="protein sequence ID" value="CAB10806.1"/>
    <property type="molecule type" value="Genomic_DNA"/>
</dbReference>
<dbReference type="PIR" id="T40185">
    <property type="entry name" value="T40185"/>
</dbReference>
<dbReference type="RefSeq" id="NP_596274.1">
    <property type="nucleotide sequence ID" value="NM_001022195.2"/>
</dbReference>
<dbReference type="ComplexPortal" id="CPX-10121">
    <property type="entry name" value="Glycosylphosphatidylinositol-N-acetylglucosaminyltransferase complex"/>
</dbReference>
<dbReference type="FunCoup" id="O14357">
    <property type="interactions" value="232"/>
</dbReference>
<dbReference type="STRING" id="284812.O14357"/>
<dbReference type="PaxDb" id="4896-SPBC30D10.11.1"/>
<dbReference type="EnsemblFungi" id="SPBC30D10.11.1">
    <property type="protein sequence ID" value="SPBC30D10.11.1:pep"/>
    <property type="gene ID" value="SPBC30D10.11"/>
</dbReference>
<dbReference type="GeneID" id="2540323"/>
<dbReference type="KEGG" id="spo:2540323"/>
<dbReference type="PomBase" id="SPBC30D10.11">
    <property type="gene designation" value="gpi1"/>
</dbReference>
<dbReference type="VEuPathDB" id="FungiDB:SPBC30D10.11"/>
<dbReference type="eggNOG" id="KOG1183">
    <property type="taxonomic scope" value="Eukaryota"/>
</dbReference>
<dbReference type="HOGENOM" id="CLU_007914_2_1_1"/>
<dbReference type="InParanoid" id="O14357"/>
<dbReference type="OMA" id="CFWPVQY"/>
<dbReference type="PhylomeDB" id="O14357"/>
<dbReference type="UniPathway" id="UPA00196"/>
<dbReference type="PRO" id="PR:O14357"/>
<dbReference type="Proteomes" id="UP000002485">
    <property type="component" value="Chromosome II"/>
</dbReference>
<dbReference type="GO" id="GO:0005783">
    <property type="term" value="C:endoplasmic reticulum"/>
    <property type="evidence" value="ECO:0007005"/>
    <property type="project" value="PomBase"/>
</dbReference>
<dbReference type="GO" id="GO:0000506">
    <property type="term" value="C:glycosylphosphatidylinositol-N-acetylglucosaminyltransferase (GPI-GnT) complex"/>
    <property type="evidence" value="ECO:0000266"/>
    <property type="project" value="PomBase"/>
</dbReference>
<dbReference type="GO" id="GO:0017176">
    <property type="term" value="F:phosphatidylinositol N-acetylglucosaminyltransferase activity"/>
    <property type="evidence" value="ECO:0000316"/>
    <property type="project" value="PomBase"/>
</dbReference>
<dbReference type="GO" id="GO:0006506">
    <property type="term" value="P:GPI anchor biosynthetic process"/>
    <property type="evidence" value="ECO:0000316"/>
    <property type="project" value="PomBase"/>
</dbReference>
<dbReference type="InterPro" id="IPR007720">
    <property type="entry name" value="PigQ/GPI1"/>
</dbReference>
<dbReference type="PANTHER" id="PTHR21329:SF3">
    <property type="entry name" value="PHOSPHATIDYLINOSITOL N-ACETYLGLUCOSAMINYLTRANSFERASE SUBUNIT Q"/>
    <property type="match status" value="1"/>
</dbReference>
<dbReference type="PANTHER" id="PTHR21329">
    <property type="entry name" value="PHOSPHATIDYLINOSITOL N-ACETYLGLUCOSAMINYLTRANSFERASE SUBUNIT Q-RELATED"/>
    <property type="match status" value="1"/>
</dbReference>
<dbReference type="Pfam" id="PF05024">
    <property type="entry name" value="Gpi1"/>
    <property type="match status" value="1"/>
</dbReference>
<feature type="chain" id="PRO_0000087557" description="N-acetylglucosaminyl-phosphatidylinositol biosynthetic protein gpi1">
    <location>
        <begin position="1"/>
        <end position="653"/>
    </location>
</feature>
<feature type="transmembrane region" description="Helical" evidence="1">
    <location>
        <begin position="43"/>
        <end position="63"/>
    </location>
</feature>
<feature type="transmembrane region" description="Helical" evidence="1">
    <location>
        <begin position="237"/>
        <end position="257"/>
    </location>
</feature>
<feature type="transmembrane region" description="Helical" evidence="1">
    <location>
        <begin position="327"/>
        <end position="347"/>
    </location>
</feature>
<feature type="transmembrane region" description="Helical" evidence="1">
    <location>
        <begin position="382"/>
        <end position="402"/>
    </location>
</feature>
<feature type="transmembrane region" description="Helical" evidence="1">
    <location>
        <begin position="407"/>
        <end position="427"/>
    </location>
</feature>
<feature type="transmembrane region" description="Helical" evidence="1">
    <location>
        <begin position="485"/>
        <end position="505"/>
    </location>
</feature>
<feature type="transmembrane region" description="Helical" evidence="1">
    <location>
        <begin position="520"/>
        <end position="540"/>
    </location>
</feature>
<feature type="transmembrane region" description="Helical" evidence="1">
    <location>
        <begin position="605"/>
        <end position="625"/>
    </location>
</feature>
<feature type="sequence conflict" description="In Ref. 1; AAC49650." evidence="2" ref="1">
    <original>L</original>
    <variation>M</variation>
    <location>
        <position position="448"/>
    </location>
</feature>
<gene>
    <name type="primary">gpi1</name>
    <name type="ORF">SPBC30D10.11</name>
</gene>
<evidence type="ECO:0000255" key="1"/>
<evidence type="ECO:0000305" key="2"/>